<gene>
    <name evidence="22" type="primary">EIF2AK4</name>
    <name type="synonym">GCN2</name>
    <name type="synonym">KIAA1338</name>
</gene>
<name>E2AK4_HUMAN</name>
<proteinExistence type="evidence at protein level"/>
<evidence type="ECO:0000250" key="1"/>
<evidence type="ECO:0000250" key="2">
    <source>
        <dbReference type="UniProtKB" id="P15442"/>
    </source>
</evidence>
<evidence type="ECO:0000250" key="3">
    <source>
        <dbReference type="UniProtKB" id="Q9QZ05"/>
    </source>
</evidence>
<evidence type="ECO:0000255" key="4"/>
<evidence type="ECO:0000255" key="5">
    <source>
        <dbReference type="PROSITE-ProRule" id="PRU00159"/>
    </source>
</evidence>
<evidence type="ECO:0000255" key="6">
    <source>
        <dbReference type="PROSITE-ProRule" id="PRU00179"/>
    </source>
</evidence>
<evidence type="ECO:0000255" key="7">
    <source>
        <dbReference type="PROSITE-ProRule" id="PRU10027"/>
    </source>
</evidence>
<evidence type="ECO:0000256" key="8">
    <source>
        <dbReference type="SAM" id="MobiDB-lite"/>
    </source>
</evidence>
<evidence type="ECO:0000269" key="9">
    <source>
    </source>
</evidence>
<evidence type="ECO:0000269" key="10">
    <source>
    </source>
</evidence>
<evidence type="ECO:0000269" key="11">
    <source>
    </source>
</evidence>
<evidence type="ECO:0000269" key="12">
    <source>
    </source>
</evidence>
<evidence type="ECO:0000269" key="13">
    <source>
    </source>
</evidence>
<evidence type="ECO:0000269" key="14">
    <source>
    </source>
</evidence>
<evidence type="ECO:0000269" key="15">
    <source>
    </source>
</evidence>
<evidence type="ECO:0000269" key="16">
    <source>
    </source>
</evidence>
<evidence type="ECO:0000269" key="17">
    <source>
    </source>
</evidence>
<evidence type="ECO:0000269" key="18">
    <source>
    </source>
</evidence>
<evidence type="ECO:0000269" key="19">
    <source>
    </source>
</evidence>
<evidence type="ECO:0000303" key="20">
    <source>
    </source>
</evidence>
<evidence type="ECO:0000305" key="21"/>
<evidence type="ECO:0000312" key="22">
    <source>
        <dbReference type="HGNC" id="HGNC:19687"/>
    </source>
</evidence>
<evidence type="ECO:0007744" key="23">
    <source>
    </source>
</evidence>
<evidence type="ECO:0007744" key="24">
    <source>
    </source>
</evidence>
<evidence type="ECO:0007744" key="25">
    <source>
    </source>
</evidence>
<evidence type="ECO:0007744" key="26">
    <source>
    </source>
</evidence>
<evidence type="ECO:0007744" key="27">
    <source>
    </source>
</evidence>
<evidence type="ECO:0007744" key="28">
    <source>
    </source>
</evidence>
<evidence type="ECO:0007744" key="29">
    <source>
    </source>
</evidence>
<evidence type="ECO:0007744" key="30">
    <source>
    </source>
</evidence>
<evidence type="ECO:0007829" key="31">
    <source>
        <dbReference type="PDB" id="6N3N"/>
    </source>
</evidence>
<evidence type="ECO:0007829" key="32">
    <source>
        <dbReference type="PDB" id="6N3O"/>
    </source>
</evidence>
<evidence type="ECO:0007829" key="33">
    <source>
        <dbReference type="PDB" id="7E2K"/>
    </source>
</evidence>
<evidence type="ECO:0007829" key="34">
    <source>
        <dbReference type="PDB" id="7E2M"/>
    </source>
</evidence>
<evidence type="ECO:0007829" key="35">
    <source>
        <dbReference type="PDB" id="7QQ6"/>
    </source>
</evidence>
<evidence type="ECO:0007829" key="36">
    <source>
        <dbReference type="PDB" id="7QWK"/>
    </source>
</evidence>
<evidence type="ECO:0007829" key="37">
    <source>
        <dbReference type="PDB" id="8T7T"/>
    </source>
</evidence>
<comment type="function">
    <text evidence="2 3 16 17 18">Metabolic-stress sensing protein kinase that phosphorylates the alpha subunit of eukaryotic translation initiation factor 2 (EIF2S1/eIF-2-alpha) in response to low amino acid availability (PubMed:25329545, PubMed:32610081). Plays a role as an activator of the integrated stress response (ISR) required for adaptation to amino acid starvation (By similarity). EIF2S1/eIF-2-alpha phosphorylation in response to stress converts EIF2S1/eIF-2-alpha into a global protein synthesis inhibitor, leading to a global attenuation of cap-dependent translation, and thus to a reduced overall utilization of amino acids, while concomitantly initiating the preferential translation of ISR-specific mRNAs, such as the transcriptional activator ATF4, and hence allowing ATF4-mediated reprogramming of amino acid biosynthetic gene expression to alleviate nutrient depletion (PubMed:32610081). Binds uncharged tRNAs (By similarity). Required for the translational induction of protein kinase PRKCH following amino acid starvation (By similarity). Involved in cell cycle arrest by promoting cyclin D1 mRNA translation repression after the unfolded protein response pathway (UPR) activation or cell cycle inhibitor CDKN1A/p21 mRNA translation activation in response to amino acid deprivation (PubMed:26102367). Plays a role in the consolidation of synaptic plasticity, learning as well as formation of long-term memory (By similarity). Plays a role in neurite outgrowth inhibition (By similarity). Plays a proapoptotic role in response to glucose deprivation (By similarity). Promotes global cellular protein synthesis repression in response to UV irradiation independently of the stress-activated protein kinase/c-Jun N-terminal kinase (SAPK/JNK) and p38 MAPK signaling pathways (By similarity). Plays a role in the antiviral response against alphavirus infection; impairs early viral mRNA translation of the incoming genomic virus RNA, thus preventing alphavirus replication (By similarity).</text>
</comment>
<comment type="function">
    <text evidence="15">(Microbial infection) Plays a role in modulating the adaptive immune response to yellow fever virus infection; promotes dendritic cells to initiate autophagy and antigene presentation to both CD4(+) and CD8(+) T-cells under amino acid starvation (PubMed:24310610).</text>
</comment>
<comment type="catalytic activity">
    <reaction evidence="3">
        <text>L-seryl-[protein] + ATP = O-phospho-L-seryl-[protein] + ADP + H(+)</text>
        <dbReference type="Rhea" id="RHEA:17989"/>
        <dbReference type="Rhea" id="RHEA-COMP:9863"/>
        <dbReference type="Rhea" id="RHEA-COMP:11604"/>
        <dbReference type="ChEBI" id="CHEBI:15378"/>
        <dbReference type="ChEBI" id="CHEBI:29999"/>
        <dbReference type="ChEBI" id="CHEBI:30616"/>
        <dbReference type="ChEBI" id="CHEBI:83421"/>
        <dbReference type="ChEBI" id="CHEBI:456216"/>
        <dbReference type="EC" id="2.7.11.1"/>
    </reaction>
</comment>
<comment type="catalytic activity">
    <reaction evidence="3">
        <text>L-threonyl-[protein] + ATP = O-phospho-L-threonyl-[protein] + ADP + H(+)</text>
        <dbReference type="Rhea" id="RHEA:46608"/>
        <dbReference type="Rhea" id="RHEA-COMP:11060"/>
        <dbReference type="Rhea" id="RHEA-COMP:11605"/>
        <dbReference type="ChEBI" id="CHEBI:15378"/>
        <dbReference type="ChEBI" id="CHEBI:30013"/>
        <dbReference type="ChEBI" id="CHEBI:30616"/>
        <dbReference type="ChEBI" id="CHEBI:61977"/>
        <dbReference type="ChEBI" id="CHEBI:456216"/>
        <dbReference type="EC" id="2.7.11.1"/>
    </reaction>
</comment>
<comment type="subunit">
    <text evidence="2 3 18">Homodimer; homodimerization is important for kinase activation by uncharged tRNAs (By similarity). Interacts with GCN1; this interaction stimulates EIF2AK4/GCN2 kinase activity and is impaired by IMPACT upon a variety of stress conditions, such as amino acid depletion, UV-C irradiation, proteasome inhibitor treatment and glucose deprivation (By similarity). Interacts with DNAJC3; this interaction inhibits EIF2AK4/GCN2 kinase activity during endoplasmic reticulum (ER), hypothermic and amino acid-starving stress conditions (By similarity). Interacts with MAP3K20; activates EIF2AK4/GCN2 kinase activity in response to moderate ribotoxic stress (PubMed:32610081).</text>
</comment>
<comment type="subunit">
    <text evidence="19">(Microbial infection) Interacts with hepatitis E virus (HEV) ORF1 protease; this interaction inhibits dimerization of EIF2AK4 and prevents EIF2AK4-mediated phosphorylation of EIF2A.</text>
</comment>
<comment type="subcellular location">
    <subcellularLocation>
        <location evidence="3">Cytoplasm</location>
    </subcellularLocation>
</comment>
<comment type="alternative products">
    <event type="alternative splicing"/>
    <isoform>
        <id>Q9P2K8-1</id>
        <name>1</name>
        <sequence type="displayed"/>
    </isoform>
    <isoform>
        <id>Q9P2K8-2</id>
        <name>2</name>
        <sequence type="described" ref="VSP_013038"/>
    </isoform>
    <isoform>
        <id>Q9P2K8-3</id>
        <name>3</name>
        <sequence type="described" ref="VSP_039185 VSP_039186"/>
    </isoform>
</comment>
<comment type="tissue specificity">
    <text evidence="9 14">Widely expressed (PubMed:10504407). Expressed in lung, smooth muscle cells and macrophages (PubMed:24292273).</text>
</comment>
<comment type="domain">
    <text evidence="3">The histidyl-tRNA synthetase-like region and protein kinase domains are necessary for eIF-2-alpha kinase activity and eIF-2-alpha-mediated translational control. The histidyl-tRNA synthetase-like domain is necessary for binding to uncharged tRNAs. Kinase domain 1 is a degenerate kinase domain.</text>
</comment>
<comment type="PTM">
    <text evidence="3">Autophosphorylated; autophosphorylation on Thr-899 is increased upon amino acid starvation and in UV irradiation cells and inhibited in presence of IMPACT.</text>
</comment>
<comment type="disease" evidence="13 14">
    <disease id="DI-04023">
        <name>Pulmonary venoocclusive disease 2, autosomal recessive</name>
        <acronym>PVOD2</acronym>
        <description>A disease characterized by widespread fibrous obstruction and intimal thickening of septal veins and preseptal venules, a low diffusing capacity for carbon monoxide, occult alveolar hemorrhage, and nodular ground-glass opacities, septal lines and lymph node enlargement showed by high-resolution computed tomography of the chest. It is frequently associated with pulmonary capillary dilatation and proliferation, and is a rare and devastating cause of pulmonary hypertension.</description>
        <dbReference type="MIM" id="234810"/>
    </disease>
    <text>The disease is caused by variants affecting the gene represented in this entry.</text>
</comment>
<comment type="similarity">
    <text evidence="5">Belongs to the protein kinase superfamily. Ser/Thr protein kinase family. GCN2 subfamily.</text>
</comment>
<comment type="sequence caution" evidence="21">
    <conflict type="miscellaneous discrepancy">
        <sequence resource="EMBL-CDS" id="BAA92576"/>
    </conflict>
    <text>Contaminating sequence. Sequence of unknown origin in the N-terminal part.</text>
</comment>
<comment type="sequence caution" evidence="21">
    <conflict type="erroneous initiation">
        <sequence resource="EMBL-CDS" id="BAB15625"/>
    </conflict>
    <text>Truncated N-terminus.</text>
</comment>
<sequence>MAGGRGAPGRGRDEPPESYPQRQDHELQALEAIYGADFQDLRPDACGPVKEPPEINLVLYPQGLTGEEVYVKVDLRVKCPPTYPDVVPEIELKNAKGLSNESVNLLKSRLEELAKKHCGEVMIFELAYHVQSFLSEHNKPPPKSFHEEMLERRAQEEQQRLLEAKRKEEQEQREILHEIQRRKEEIKEEKKRKEMAKQERLEIASLSNQDHTSKKDPGGHRTAAILHGGSPDFVGNGKHRANSSGRSRRERQYSVCNSEDSPGSCEILYFNMGSPDQLMVHKGKCIGSDEQLGKLVYNALETATGGFVLLYEWVLQWQKKMGPFLTSQEKEKIDKCKKQIQGTETEFNSLVKLSHPNVVRYLAMNLKEQDDSIVVDILVEHISGVSLAAHLSHSGPIPVHQLRRYTAQLLSGLDYLHSNSVVHKVLSASNVLVDAEGTVKITDYSISKRLADICKEDVFEQTRVRFSDNALPYKTGKKGDVWRLGLLLLSLSQGQECGEYPVTIPSDLPADFQDFLKKCVCLDDKERWSPQQLLKHSFINPQPKMPLVEQSPEDSEGQDYVETVIPSNRLPSAAFFSETQRQFSRYFIEFEELQLLGKGAFGAVIKVQNKLDGCCYAVKRIPINPASRQFRRIKGEVTLLSRLHHENIVRYYNAWIERHERPAGPGTPPPDSGPLAKDDRAARGQPASDTDGLDSVEAAAPPPILSSSVEWSTSGERSASARFPATGPGSSDDEDDDEDEHGGVFSQSFLPASDSESDIIFDNEDENSKSQNQDEDCNEKNGCHESEPSVTTEAVHYLYIQMEYCEKSTLRDTIDQGLYRDTVRLWRLFREILDGLAYIHEKGMIHRDLKPVNIFLDSDDHVKIGDFGLATDHLAFSADSKQDDQTGDLIKSDPSGHLTGMVGTALYVSPEVQGSTKSAYNQKVDLFSLGIIFFEMSYHPMVTASERIFVLNQLRDPTSPKFPEDFDDGEHAKQKSVISWLLNHDPAKRPTATELLKSELLPPPQMEESELHEVLHHTLTNVDGKAYRTMMAQIFSQRISPAIDYTYDSDILKGNFSIRTAKMQQHVCETIIRIFKRHGAVQLCTPLLLPRNRQIYEHNEAALFMDHSGMLVMLPFDLRIPFARYVARNNILNLKRYCIERVFRPRKLDRFHPKELLECAFDIVTSTTNSFLPTAEIIYTIYEIIQEFPALQERNYSIYLNHTMLLKAILLHCGIPEDKLSQVYIILYDAVTEKLTRREVEAKFCNLSLSSNSLCRLYKFIEQKGDLQDLMPTINSLIKQKTGIAQLVKYGLKDLEEVVGLLKKLGIKLQVLINLGLVYKVQQHNGIIFQFVAFIKRRQRAVPEILAAGGRYDLLIPQFRGPQALGPVPTAIGVSIAIDKISAAVLNMEESVTISSCDLLVVSVGQMSMSRAINLTQKLWTAGITAEIMYDWSQSQEELQEYCRHHEITYVALVSDKEGSHVKVKSFEKERQTEKRVLETELVDHVLQKLRTKVTDERNGREASDNLAVQNLKGSFSNASGLFEIHGATVVPIVSVLAPEKLSASTRRRYETQVQTRLQTSLANLHQKSSEIEILAVDLPKETILQFLSLEWDADEQAFNTTVKQLLSRLPKQRYLKLVCDEIYNIKVEKKVSVLFLYSYRDDYYRILF</sequence>
<reference key="1">
    <citation type="journal article" date="2006" name="Nature">
        <title>Analysis of the DNA sequence and duplication history of human chromosome 15.</title>
        <authorList>
            <person name="Zody M.C."/>
            <person name="Garber M."/>
            <person name="Sharpe T."/>
            <person name="Young S.K."/>
            <person name="Rowen L."/>
            <person name="O'Neill K."/>
            <person name="Whittaker C.A."/>
            <person name="Kamal M."/>
            <person name="Chang J.L."/>
            <person name="Cuomo C.A."/>
            <person name="Dewar K."/>
            <person name="FitzGerald M.G."/>
            <person name="Kodira C.D."/>
            <person name="Madan A."/>
            <person name="Qin S."/>
            <person name="Yang X."/>
            <person name="Abbasi N."/>
            <person name="Abouelleil A."/>
            <person name="Arachchi H.M."/>
            <person name="Baradarani L."/>
            <person name="Birditt B."/>
            <person name="Bloom S."/>
            <person name="Bloom T."/>
            <person name="Borowsky M.L."/>
            <person name="Burke J."/>
            <person name="Butler J."/>
            <person name="Cook A."/>
            <person name="DeArellano K."/>
            <person name="DeCaprio D."/>
            <person name="Dorris L. III"/>
            <person name="Dors M."/>
            <person name="Eichler E.E."/>
            <person name="Engels R."/>
            <person name="Fahey J."/>
            <person name="Fleetwood P."/>
            <person name="Friedman C."/>
            <person name="Gearin G."/>
            <person name="Hall J.L."/>
            <person name="Hensley G."/>
            <person name="Johnson E."/>
            <person name="Jones C."/>
            <person name="Kamat A."/>
            <person name="Kaur A."/>
            <person name="Locke D.P."/>
            <person name="Madan A."/>
            <person name="Munson G."/>
            <person name="Jaffe D.B."/>
            <person name="Lui A."/>
            <person name="Macdonald P."/>
            <person name="Mauceli E."/>
            <person name="Naylor J.W."/>
            <person name="Nesbitt R."/>
            <person name="Nicol R."/>
            <person name="O'Leary S.B."/>
            <person name="Ratcliffe A."/>
            <person name="Rounsley S."/>
            <person name="She X."/>
            <person name="Sneddon K.M.B."/>
            <person name="Stewart S."/>
            <person name="Sougnez C."/>
            <person name="Stone S.M."/>
            <person name="Topham K."/>
            <person name="Vincent D."/>
            <person name="Wang S."/>
            <person name="Zimmer A.R."/>
            <person name="Birren B.W."/>
            <person name="Hood L."/>
            <person name="Lander E.S."/>
            <person name="Nusbaum C."/>
        </authorList>
    </citation>
    <scope>NUCLEOTIDE SEQUENCE [LARGE SCALE GENOMIC DNA]</scope>
</reference>
<reference key="2">
    <citation type="journal article" date="2004" name="Genome Res.">
        <title>The status, quality, and expansion of the NIH full-length cDNA project: the Mammalian Gene Collection (MGC).</title>
        <authorList>
            <consortium name="The MGC Project Team"/>
        </authorList>
    </citation>
    <scope>NUCLEOTIDE SEQUENCE [LARGE SCALE MRNA] (ISOFORM 3)</scope>
    <scope>NUCLEOTIDE SEQUENCE [LARGE SCALE MRNA] OF 821-1649 (ISOFORM 1)</scope>
    <scope>VARIANT CYS-1306</scope>
    <source>
        <tissue>Muscle</tissue>
        <tissue>Uterus</tissue>
    </source>
</reference>
<reference key="3">
    <citation type="journal article" date="2000" name="DNA Res.">
        <title>Prediction of the coding sequences of unidentified human genes. XVI. The complete sequences of 150 new cDNA clones from brain which code for large proteins in vitro.</title>
        <authorList>
            <person name="Nagase T."/>
            <person name="Kikuno R."/>
            <person name="Ishikawa K."/>
            <person name="Hirosawa M."/>
            <person name="Ohara O."/>
        </authorList>
    </citation>
    <scope>NUCLEOTIDE SEQUENCE [LARGE SCALE MRNA] OF 177-1649</scope>
    <source>
        <tissue>Brain</tissue>
    </source>
</reference>
<reference key="4">
    <citation type="journal article" date="2007" name="BMC Genomics">
        <title>The full-ORF clone resource of the German cDNA consortium.</title>
        <authorList>
            <person name="Bechtel S."/>
            <person name="Rosenfelder H."/>
            <person name="Duda A."/>
            <person name="Schmidt C.P."/>
            <person name="Ernst U."/>
            <person name="Wellenreuther R."/>
            <person name="Mehrle A."/>
            <person name="Schuster C."/>
            <person name="Bahr A."/>
            <person name="Bloecker H."/>
            <person name="Heubner D."/>
            <person name="Hoerlein A."/>
            <person name="Michel G."/>
            <person name="Wedler H."/>
            <person name="Koehrer K."/>
            <person name="Ottenwaelder B."/>
            <person name="Poustka A."/>
            <person name="Wiemann S."/>
            <person name="Schupp I."/>
        </authorList>
    </citation>
    <scope>NUCLEOTIDE SEQUENCE [LARGE SCALE MRNA] OF 196-1649</scope>
    <scope>VARIANT LEU-441</scope>
    <source>
        <tissue>Melanoma</tissue>
        <tissue>Testis</tissue>
    </source>
</reference>
<reference key="5">
    <citation type="journal article" date="2004" name="Nat. Genet.">
        <title>Complete sequencing and characterization of 21,243 full-length human cDNAs.</title>
        <authorList>
            <person name="Ota T."/>
            <person name="Suzuki Y."/>
            <person name="Nishikawa T."/>
            <person name="Otsuki T."/>
            <person name="Sugiyama T."/>
            <person name="Irie R."/>
            <person name="Wakamatsu A."/>
            <person name="Hayashi K."/>
            <person name="Sato H."/>
            <person name="Nagai K."/>
            <person name="Kimura K."/>
            <person name="Makita H."/>
            <person name="Sekine M."/>
            <person name="Obayashi M."/>
            <person name="Nishi T."/>
            <person name="Shibahara T."/>
            <person name="Tanaka T."/>
            <person name="Ishii S."/>
            <person name="Yamamoto J."/>
            <person name="Saito K."/>
            <person name="Kawai Y."/>
            <person name="Isono Y."/>
            <person name="Nakamura Y."/>
            <person name="Nagahari K."/>
            <person name="Murakami K."/>
            <person name="Yasuda T."/>
            <person name="Iwayanagi T."/>
            <person name="Wagatsuma M."/>
            <person name="Shiratori A."/>
            <person name="Sudo H."/>
            <person name="Hosoiri T."/>
            <person name="Kaku Y."/>
            <person name="Kodaira H."/>
            <person name="Kondo H."/>
            <person name="Sugawara M."/>
            <person name="Takahashi M."/>
            <person name="Kanda K."/>
            <person name="Yokoi T."/>
            <person name="Furuya T."/>
            <person name="Kikkawa E."/>
            <person name="Omura Y."/>
            <person name="Abe K."/>
            <person name="Kamihara K."/>
            <person name="Katsuta N."/>
            <person name="Sato K."/>
            <person name="Tanikawa M."/>
            <person name="Yamazaki M."/>
            <person name="Ninomiya K."/>
            <person name="Ishibashi T."/>
            <person name="Yamashita H."/>
            <person name="Murakawa K."/>
            <person name="Fujimori K."/>
            <person name="Tanai H."/>
            <person name="Kimata M."/>
            <person name="Watanabe M."/>
            <person name="Hiraoka S."/>
            <person name="Chiba Y."/>
            <person name="Ishida S."/>
            <person name="Ono Y."/>
            <person name="Takiguchi S."/>
            <person name="Watanabe S."/>
            <person name="Yosida M."/>
            <person name="Hotuta T."/>
            <person name="Kusano J."/>
            <person name="Kanehori K."/>
            <person name="Takahashi-Fujii A."/>
            <person name="Hara H."/>
            <person name="Tanase T.-O."/>
            <person name="Nomura Y."/>
            <person name="Togiya S."/>
            <person name="Komai F."/>
            <person name="Hara R."/>
            <person name="Takeuchi K."/>
            <person name="Arita M."/>
            <person name="Imose N."/>
            <person name="Musashino K."/>
            <person name="Yuuki H."/>
            <person name="Oshima A."/>
            <person name="Sasaki N."/>
            <person name="Aotsuka S."/>
            <person name="Yoshikawa Y."/>
            <person name="Matsunawa H."/>
            <person name="Ichihara T."/>
            <person name="Shiohata N."/>
            <person name="Sano S."/>
            <person name="Moriya S."/>
            <person name="Momiyama H."/>
            <person name="Satoh N."/>
            <person name="Takami S."/>
            <person name="Terashima Y."/>
            <person name="Suzuki O."/>
            <person name="Nakagawa S."/>
            <person name="Senoh A."/>
            <person name="Mizoguchi H."/>
            <person name="Goto Y."/>
            <person name="Shimizu F."/>
            <person name="Wakebe H."/>
            <person name="Hishigaki H."/>
            <person name="Watanabe T."/>
            <person name="Sugiyama A."/>
            <person name="Takemoto M."/>
            <person name="Kawakami B."/>
            <person name="Yamazaki M."/>
            <person name="Watanabe K."/>
            <person name="Kumagai A."/>
            <person name="Itakura S."/>
            <person name="Fukuzumi Y."/>
            <person name="Fujimori Y."/>
            <person name="Komiyama M."/>
            <person name="Tashiro H."/>
            <person name="Tanigami A."/>
            <person name="Fujiwara T."/>
            <person name="Ono T."/>
            <person name="Yamada K."/>
            <person name="Fujii Y."/>
            <person name="Ozaki K."/>
            <person name="Hirao M."/>
            <person name="Ohmori Y."/>
            <person name="Kawabata A."/>
            <person name="Hikiji T."/>
            <person name="Kobatake N."/>
            <person name="Inagaki H."/>
            <person name="Ikema Y."/>
            <person name="Okamoto S."/>
            <person name="Okitani R."/>
            <person name="Kawakami T."/>
            <person name="Noguchi S."/>
            <person name="Itoh T."/>
            <person name="Shigeta K."/>
            <person name="Senba T."/>
            <person name="Matsumura K."/>
            <person name="Nakajima Y."/>
            <person name="Mizuno T."/>
            <person name="Morinaga M."/>
            <person name="Sasaki M."/>
            <person name="Togashi T."/>
            <person name="Oyama M."/>
            <person name="Hata H."/>
            <person name="Watanabe M."/>
            <person name="Komatsu T."/>
            <person name="Mizushima-Sugano J."/>
            <person name="Satoh T."/>
            <person name="Shirai Y."/>
            <person name="Takahashi Y."/>
            <person name="Nakagawa K."/>
            <person name="Okumura K."/>
            <person name="Nagase T."/>
            <person name="Nomura N."/>
            <person name="Kikuchi H."/>
            <person name="Masuho Y."/>
            <person name="Yamashita R."/>
            <person name="Nakai K."/>
            <person name="Yada T."/>
            <person name="Nakamura Y."/>
            <person name="Ohara O."/>
            <person name="Isogai T."/>
            <person name="Sugano S."/>
        </authorList>
    </citation>
    <scope>NUCLEOTIDE SEQUENCE [LARGE SCALE MRNA] OF 831-1649</scope>
</reference>
<reference key="6">
    <citation type="journal article" date="1999" name="Eur. J. Biochem.">
        <title>Characterization of a mammalian homolog of the GCN2 eukaryotic initiation factor 2alpha kinase.</title>
        <authorList>
            <person name="Berlanga J.J."/>
            <person name="Santoyo J."/>
            <person name="de Haro C."/>
        </authorList>
    </citation>
    <scope>NUCLEOTIDE SEQUENCE [MRNA] OF 1102-1649</scope>
    <scope>TISSUE SPECIFICITY</scope>
</reference>
<reference key="7">
    <citation type="journal article" date="2006" name="Cell">
        <title>Global, in vivo, and site-specific phosphorylation dynamics in signaling networks.</title>
        <authorList>
            <person name="Olsen J.V."/>
            <person name="Blagoev B."/>
            <person name="Gnad F."/>
            <person name="Macek B."/>
            <person name="Kumar C."/>
            <person name="Mortensen P."/>
            <person name="Mann M."/>
        </authorList>
    </citation>
    <scope>PHOSPHORYLATION [LARGE SCALE ANALYSIS] AT THR-667</scope>
    <scope>IDENTIFICATION BY MASS SPECTROMETRY [LARGE SCALE ANALYSIS]</scope>
    <source>
        <tissue>Cervix carcinoma</tissue>
    </source>
</reference>
<reference key="8">
    <citation type="journal article" date="2008" name="Mol. Cell">
        <title>Kinase-selective enrichment enables quantitative phosphoproteomics of the kinome across the cell cycle.</title>
        <authorList>
            <person name="Daub H."/>
            <person name="Olsen J.V."/>
            <person name="Bairlein M."/>
            <person name="Gnad F."/>
            <person name="Oppermann F.S."/>
            <person name="Korner R."/>
            <person name="Greff Z."/>
            <person name="Keri G."/>
            <person name="Stemmann O."/>
            <person name="Mann M."/>
        </authorList>
    </citation>
    <scope>PHOSPHORYLATION [LARGE SCALE ANALYSIS] AT SER-230 AND THR-667</scope>
    <scope>IDENTIFICATION BY MASS SPECTROMETRY [LARGE SCALE ANALYSIS]</scope>
    <source>
        <tissue>Cervix carcinoma</tissue>
    </source>
</reference>
<reference key="9">
    <citation type="journal article" date="2008" name="Proc. Natl. Acad. Sci. U.S.A.">
        <title>A quantitative atlas of mitotic phosphorylation.</title>
        <authorList>
            <person name="Dephoure N."/>
            <person name="Zhou C."/>
            <person name="Villen J."/>
            <person name="Beausoleil S.A."/>
            <person name="Bakalarski C.E."/>
            <person name="Elledge S.J."/>
            <person name="Gygi S.P."/>
        </authorList>
    </citation>
    <scope>PHOSPHORYLATION [LARGE SCALE ANALYSIS] AT SER-230</scope>
    <scope>IDENTIFICATION BY MASS SPECTROMETRY [LARGE SCALE ANALYSIS]</scope>
    <source>
        <tissue>Cervix carcinoma</tissue>
    </source>
</reference>
<reference key="10">
    <citation type="journal article" date="2009" name="Mol. Cell. Proteomics">
        <title>Large-scale proteomics analysis of the human kinome.</title>
        <authorList>
            <person name="Oppermann F.S."/>
            <person name="Gnad F."/>
            <person name="Olsen J.V."/>
            <person name="Hornberger R."/>
            <person name="Greff Z."/>
            <person name="Keri G."/>
            <person name="Mann M."/>
            <person name="Daub H."/>
        </authorList>
    </citation>
    <scope>PHOSPHORYLATION [LARGE SCALE ANALYSIS] AT THR-667</scope>
    <scope>IDENTIFICATION BY MASS SPECTROMETRY [LARGE SCALE ANALYSIS]</scope>
</reference>
<reference key="11">
    <citation type="journal article" date="2009" name="Science">
        <title>Lysine acetylation targets protein complexes and co-regulates major cellular functions.</title>
        <authorList>
            <person name="Choudhary C."/>
            <person name="Kumar C."/>
            <person name="Gnad F."/>
            <person name="Nielsen M.L."/>
            <person name="Rehman M."/>
            <person name="Walther T.C."/>
            <person name="Olsen J.V."/>
            <person name="Mann M."/>
        </authorList>
    </citation>
    <scope>ACETYLATION [LARGE SCALE ANALYSIS] AT LYS-1259</scope>
    <scope>IDENTIFICATION BY MASS SPECTROMETRY [LARGE SCALE ANALYSIS]</scope>
</reference>
<reference key="12">
    <citation type="journal article" date="2010" name="Sci. Signal.">
        <title>Quantitative phosphoproteomics reveals widespread full phosphorylation site occupancy during mitosis.</title>
        <authorList>
            <person name="Olsen J.V."/>
            <person name="Vermeulen M."/>
            <person name="Santamaria A."/>
            <person name="Kumar C."/>
            <person name="Miller M.L."/>
            <person name="Jensen L.J."/>
            <person name="Gnad F."/>
            <person name="Cox J."/>
            <person name="Jensen T.S."/>
            <person name="Nigg E.A."/>
            <person name="Brunak S."/>
            <person name="Mann M."/>
        </authorList>
    </citation>
    <scope>PHOSPHORYLATION [LARGE SCALE ANALYSIS] AT SER-230 AND THR-667</scope>
    <scope>IDENTIFICATION BY MASS SPECTROMETRY [LARGE SCALE ANALYSIS]</scope>
    <source>
        <tissue>Cervix carcinoma</tissue>
    </source>
</reference>
<reference key="13">
    <citation type="journal article" date="2011" name="BMC Syst. Biol.">
        <title>Initial characterization of the human central proteome.</title>
        <authorList>
            <person name="Burkard T.R."/>
            <person name="Planyavsky M."/>
            <person name="Kaupe I."/>
            <person name="Breitwieser F.P."/>
            <person name="Buerckstuemmer T."/>
            <person name="Bennett K.L."/>
            <person name="Superti-Furga G."/>
            <person name="Colinge J."/>
        </authorList>
    </citation>
    <scope>IDENTIFICATION BY MASS SPECTROMETRY [LARGE SCALE ANALYSIS]</scope>
</reference>
<reference key="14">
    <citation type="journal article" date="2011" name="Sci. Signal.">
        <title>System-wide temporal characterization of the proteome and phosphoproteome of human embryonic stem cell differentiation.</title>
        <authorList>
            <person name="Rigbolt K.T."/>
            <person name="Prokhorova T.A."/>
            <person name="Akimov V."/>
            <person name="Henningsen J."/>
            <person name="Johansen P.T."/>
            <person name="Kratchmarova I."/>
            <person name="Kassem M."/>
            <person name="Mann M."/>
            <person name="Olsen J.V."/>
            <person name="Blagoev B."/>
        </authorList>
    </citation>
    <scope>PHOSPHORYLATION [LARGE SCALE ANALYSIS] AT SER-230</scope>
    <scope>IDENTIFICATION BY MASS SPECTROMETRY [LARGE SCALE ANALYSIS]</scope>
</reference>
<reference key="15">
    <citation type="journal article" date="2013" name="J. Proteome Res.">
        <title>Toward a comprehensive characterization of a human cancer cell phosphoproteome.</title>
        <authorList>
            <person name="Zhou H."/>
            <person name="Di Palma S."/>
            <person name="Preisinger C."/>
            <person name="Peng M."/>
            <person name="Polat A.N."/>
            <person name="Heck A.J."/>
            <person name="Mohammed S."/>
        </authorList>
    </citation>
    <scope>PHOSPHORYLATION [LARGE SCALE ANALYSIS] AT SER-230; THR-667 AND THR-871</scope>
    <scope>IDENTIFICATION BY MASS SPECTROMETRY [LARGE SCALE ANALYSIS]</scope>
    <source>
        <tissue>Cervix carcinoma</tissue>
        <tissue>Erythroleukemia</tissue>
    </source>
</reference>
<reference key="16">
    <citation type="journal article" date="2014" name="Chest">
        <title>EIF2AK4 mutations in pulmonary capillary hemangiomatosis.</title>
        <authorList>
            <person name="Best D.H."/>
            <person name="Sumner K.L."/>
            <person name="Austin E.D."/>
            <person name="Chung W.K."/>
            <person name="Brown L.M."/>
            <person name="Borczuk A.C."/>
            <person name="Rosenzweig E.B."/>
            <person name="Bayrak-Toydemir P."/>
            <person name="Mao R."/>
            <person name="Cahill B.C."/>
            <person name="Tazelaar H.D."/>
            <person name="Leslie K.O."/>
            <person name="Hemnes A.R."/>
            <person name="Robbins I.M."/>
            <person name="Elliott C.G."/>
        </authorList>
    </citation>
    <scope>INVOLVEMENT IN PVOD2</scope>
</reference>
<reference key="17">
    <citation type="journal article" date="2014" name="Nat. Genet.">
        <title>EIF2AK4 mutations cause pulmonary veno-occlusive disease, a recessive form of pulmonary hypertension.</title>
        <authorList>
            <person name="Eyries M."/>
            <person name="Montani D."/>
            <person name="Girerd B."/>
            <person name="Perret C."/>
            <person name="Leroy A."/>
            <person name="Lonjou C."/>
            <person name="Chelghoum N."/>
            <person name="Coulet F."/>
            <person name="Bonnet D."/>
            <person name="Dorfmueller P."/>
            <person name="Fadel E."/>
            <person name="Sitbon O."/>
            <person name="Simonneau G."/>
            <person name="Tregouet D.A."/>
            <person name="Humbert M."/>
            <person name="Soubrier F."/>
        </authorList>
    </citation>
    <scope>TISSUE SPECIFICITY</scope>
    <scope>VARIANTS PVOD2 GLN-585 AND ARG-643</scope>
</reference>
<reference key="18">
    <citation type="journal article" date="2014" name="Science">
        <title>Vaccine activation of the nutrient sensor GCN2 in dendritic cells enhances antigen presentation.</title>
        <authorList>
            <person name="Ravindran R."/>
            <person name="Khan N."/>
            <person name="Nakaya H.I."/>
            <person name="Li S."/>
            <person name="Loebbermann J."/>
            <person name="Maddur M.S."/>
            <person name="Park Y."/>
            <person name="Jones D.P."/>
            <person name="Chappert P."/>
            <person name="Davoust J."/>
            <person name="Weiss D.S."/>
            <person name="Virgin H.W."/>
            <person name="Ron D."/>
            <person name="Pulendran B."/>
        </authorList>
    </citation>
    <scope>FUNCTION (MICROBIAL INFECTION)</scope>
</reference>
<reference key="19">
    <citation type="journal article" date="2015" name="Biochem. J.">
        <title>p58IPK is an inhibitor of the eIF2alpha kinase GCN2 and its localization and expression underpin protein synthesis and ER processing capacity.</title>
        <authorList>
            <person name="Roobol A."/>
            <person name="Roobol J."/>
            <person name="Bastide A."/>
            <person name="Knight J.R."/>
            <person name="Willis A.E."/>
            <person name="Smales C.M."/>
        </authorList>
    </citation>
    <scope>FUNCTION</scope>
</reference>
<reference key="20">
    <citation type="journal article" date="2015" name="PLoS Genet.">
        <title>Translational Upregulation of an Individual p21Cip1 Transcript Variant by GCN2 Regulates Cell Proliferation and Survival under Nutrient Stress.</title>
        <authorList>
            <person name="Lehman S.L."/>
            <person name="Cerniglia G.J."/>
            <person name="Johannes G.J."/>
            <person name="Ye J."/>
            <person name="Ryeom S."/>
            <person name="Koumenis C."/>
        </authorList>
    </citation>
    <scope>FUNCTION</scope>
</reference>
<reference key="21">
    <citation type="journal article" date="2023" name="J. Virol.">
        <title>Hepatitis E Virus Protease Inhibits the Activity of Eukaryotic Initiation Factor 2-Alpha Kinase 4 and Promotes Virus Survival.</title>
        <authorList>
            <person name="Kumar A."/>
            <person name="Subramani C."/>
            <person name="Raj S."/>
            <person name="Ranjith-Kumar C.T."/>
            <person name="Surjit M."/>
        </authorList>
    </citation>
    <scope>INTERACTION WITH HEV ORF1 PROTEASE (MICROBIAL INFECTION)</scope>
</reference>
<reference key="22">
    <citation type="journal article" date="2020" name="Cell">
        <title>Ribosome collisions trigger general stress responses to regulate cell fate.</title>
        <authorList>
            <person name="Wu C.C."/>
            <person name="Peterson A."/>
            <person name="Zinshteyn B."/>
            <person name="Regot S."/>
            <person name="Green R."/>
        </authorList>
    </citation>
    <scope>FUNCTION</scope>
    <scope>INTERACTION WITH MAP3K20</scope>
</reference>
<reference key="23">
    <citation type="journal article" date="2007" name="Nature">
        <title>Patterns of somatic mutation in human cancer genomes.</title>
        <authorList>
            <person name="Greenman C."/>
            <person name="Stephens P."/>
            <person name="Smith R."/>
            <person name="Dalgliesh G.L."/>
            <person name="Hunter C."/>
            <person name="Bignell G."/>
            <person name="Davies H."/>
            <person name="Teague J."/>
            <person name="Butler A."/>
            <person name="Stevens C."/>
            <person name="Edkins S."/>
            <person name="O'Meara S."/>
            <person name="Vastrik I."/>
            <person name="Schmidt E.E."/>
            <person name="Avis T."/>
            <person name="Barthorpe S."/>
            <person name="Bhamra G."/>
            <person name="Buck G."/>
            <person name="Choudhury B."/>
            <person name="Clements J."/>
            <person name="Cole J."/>
            <person name="Dicks E."/>
            <person name="Forbes S."/>
            <person name="Gray K."/>
            <person name="Halliday K."/>
            <person name="Harrison R."/>
            <person name="Hills K."/>
            <person name="Hinton J."/>
            <person name="Jenkinson A."/>
            <person name="Jones D."/>
            <person name="Menzies A."/>
            <person name="Mironenko T."/>
            <person name="Perry J."/>
            <person name="Raine K."/>
            <person name="Richardson D."/>
            <person name="Shepherd R."/>
            <person name="Small A."/>
            <person name="Tofts C."/>
            <person name="Varian J."/>
            <person name="Webb T."/>
            <person name="West S."/>
            <person name="Widaa S."/>
            <person name="Yates A."/>
            <person name="Cahill D.P."/>
            <person name="Louis D.N."/>
            <person name="Goldstraw P."/>
            <person name="Nicholson A.G."/>
            <person name="Brasseur F."/>
            <person name="Looijenga L."/>
            <person name="Weber B.L."/>
            <person name="Chiew Y.-E."/>
            <person name="DeFazio A."/>
            <person name="Greaves M.F."/>
            <person name="Green A.R."/>
            <person name="Campbell P."/>
            <person name="Birney E."/>
            <person name="Easton D.F."/>
            <person name="Chenevix-Trench G."/>
            <person name="Tan M.-H."/>
            <person name="Khoo S.K."/>
            <person name="Teh B.T."/>
            <person name="Yuen S.T."/>
            <person name="Leung S.Y."/>
            <person name="Wooster R."/>
            <person name="Futreal P.A."/>
            <person name="Stratton M.R."/>
        </authorList>
    </citation>
    <scope>VARIANTS [LARGE SCALE ANALYSIS] ARG-137; TRP-166; LEU-441; VAL-872; TYR-939; ARG-1060; CYS-1306; ARG-1336 AND HIS-1406</scope>
</reference>
<keyword id="KW-0002">3D-structure</keyword>
<keyword id="KW-0007">Acetylation</keyword>
<keyword id="KW-1072">Activation of host autophagy by virus</keyword>
<keyword id="KW-0010">Activator</keyword>
<keyword id="KW-1064">Adaptive immunity</keyword>
<keyword id="KW-0025">Alternative splicing</keyword>
<keyword id="KW-0051">Antiviral defense</keyword>
<keyword id="KW-0067">ATP-binding</keyword>
<keyword id="KW-0131">Cell cycle</keyword>
<keyword id="KW-0175">Coiled coil</keyword>
<keyword id="KW-0963">Cytoplasm</keyword>
<keyword id="KW-0225">Disease variant</keyword>
<keyword id="KW-0338">Growth arrest</keyword>
<keyword id="KW-0945">Host-virus interaction</keyword>
<keyword id="KW-0391">Immunity</keyword>
<keyword id="KW-0418">Kinase</keyword>
<keyword id="KW-0524">Neurogenesis</keyword>
<keyword id="KW-0547">Nucleotide-binding</keyword>
<keyword id="KW-0597">Phosphoprotein</keyword>
<keyword id="KW-1267">Proteomics identification</keyword>
<keyword id="KW-1185">Reference proteome</keyword>
<keyword id="KW-0677">Repeat</keyword>
<keyword id="KW-0694">RNA-binding</keyword>
<keyword id="KW-0723">Serine/threonine-protein kinase</keyword>
<keyword id="KW-0346">Stress response</keyword>
<keyword id="KW-0808">Transferase</keyword>
<keyword id="KW-0810">Translation regulation</keyword>
<keyword id="KW-0820">tRNA-binding</keyword>
<organism>
    <name type="scientific">Homo sapiens</name>
    <name type="common">Human</name>
    <dbReference type="NCBI Taxonomy" id="9606"/>
    <lineage>
        <taxon>Eukaryota</taxon>
        <taxon>Metazoa</taxon>
        <taxon>Chordata</taxon>
        <taxon>Craniata</taxon>
        <taxon>Vertebrata</taxon>
        <taxon>Euteleostomi</taxon>
        <taxon>Mammalia</taxon>
        <taxon>Eutheria</taxon>
        <taxon>Euarchontoglires</taxon>
        <taxon>Primates</taxon>
        <taxon>Haplorrhini</taxon>
        <taxon>Catarrhini</taxon>
        <taxon>Hominidae</taxon>
        <taxon>Homo</taxon>
    </lineage>
</organism>
<feature type="chain" id="PRO_0000085947" description="eIF-2-alpha kinase GCN2">
    <location>
        <begin position="1"/>
        <end position="1649"/>
    </location>
</feature>
<feature type="domain" description="RWD" evidence="6">
    <location>
        <begin position="25"/>
        <end position="137"/>
    </location>
</feature>
<feature type="domain" description="Protein kinase 1" evidence="5">
    <location>
        <begin position="296"/>
        <end position="539"/>
    </location>
</feature>
<feature type="domain" description="Protein kinase 2" evidence="5">
    <location>
        <begin position="590"/>
        <end position="1001"/>
    </location>
</feature>
<feature type="region of interest" description="Disordered" evidence="8">
    <location>
        <begin position="1"/>
        <end position="25"/>
    </location>
</feature>
<feature type="region of interest" description="Disordered" evidence="8">
    <location>
        <begin position="138"/>
        <end position="158"/>
    </location>
</feature>
<feature type="region of interest" description="Disordered" evidence="8">
    <location>
        <begin position="227"/>
        <end position="256"/>
    </location>
</feature>
<feature type="region of interest" description="Disordered" evidence="8">
    <location>
        <begin position="660"/>
        <end position="750"/>
    </location>
</feature>
<feature type="region of interest" description="Disordered" evidence="8">
    <location>
        <begin position="766"/>
        <end position="788"/>
    </location>
</feature>
<feature type="region of interest" description="Histidyl-tRNA synthetase-like">
    <location>
        <begin position="1022"/>
        <end position="1493"/>
    </location>
</feature>
<feature type="coiled-coil region" evidence="4">
    <location>
        <begin position="146"/>
        <end position="205"/>
    </location>
</feature>
<feature type="compositionally biased region" description="Basic residues" evidence="8">
    <location>
        <begin position="237"/>
        <end position="249"/>
    </location>
</feature>
<feature type="compositionally biased region" description="Polar residues" evidence="8">
    <location>
        <begin position="705"/>
        <end position="717"/>
    </location>
</feature>
<feature type="compositionally biased region" description="Acidic residues" evidence="8">
    <location>
        <begin position="731"/>
        <end position="740"/>
    </location>
</feature>
<feature type="compositionally biased region" description="Basic and acidic residues" evidence="8">
    <location>
        <begin position="778"/>
        <end position="787"/>
    </location>
</feature>
<feature type="active site" description="Proton acceptor" evidence="5 7">
    <location>
        <position position="848"/>
    </location>
</feature>
<feature type="binding site" evidence="5">
    <location>
        <begin position="596"/>
        <end position="604"/>
    </location>
    <ligand>
        <name>ATP</name>
        <dbReference type="ChEBI" id="CHEBI:30616"/>
    </ligand>
</feature>
<feature type="binding site" evidence="5">
    <location>
        <position position="619"/>
    </location>
    <ligand>
        <name>ATP</name>
        <dbReference type="ChEBI" id="CHEBI:30616"/>
    </ligand>
</feature>
<feature type="modified residue" description="Phosphoserine" evidence="24 25 28 29 30">
    <location>
        <position position="230"/>
    </location>
</feature>
<feature type="modified residue" description="Phosphothreonine" evidence="23 25 26 28 30">
    <location>
        <position position="667"/>
    </location>
</feature>
<feature type="modified residue" description="Phosphothreonine" evidence="30">
    <location>
        <position position="871"/>
    </location>
</feature>
<feature type="modified residue" description="Phosphothreonine; by autocatalysis" evidence="3">
    <location>
        <position position="899"/>
    </location>
</feature>
<feature type="modified residue" description="Phosphothreonine; by autocatalysis" evidence="1">
    <location>
        <position position="904"/>
    </location>
</feature>
<feature type="modified residue" description="N6-acetyllysine" evidence="27">
    <location>
        <position position="1259"/>
    </location>
</feature>
<feature type="splice variant" id="VSP_039185" description="In isoform 3." evidence="20">
    <original>QNKLDGCCY</original>
    <variation>WYRVIPSPL</variation>
    <location>
        <begin position="608"/>
        <end position="616"/>
    </location>
</feature>
<feature type="splice variant" id="VSP_039186" description="In isoform 3." evidence="20">
    <location>
        <begin position="617"/>
        <end position="1649"/>
    </location>
</feature>
<feature type="splice variant" id="VSP_013038" description="In isoform 2." evidence="21">
    <location>
        <begin position="774"/>
        <end position="801"/>
    </location>
</feature>
<feature type="sequence variant" id="VAR_040479" description="In dbSNP:rs35509999." evidence="11">
    <original>H</original>
    <variation>R</variation>
    <location>
        <position position="137"/>
    </location>
</feature>
<feature type="sequence variant" id="VAR_040480" description="In dbSNP:rs34439704." evidence="11">
    <original>R</original>
    <variation>W</variation>
    <location>
        <position position="166"/>
    </location>
</feature>
<feature type="sequence variant" id="VAR_040481" description="In dbSNP:rs2291627." evidence="11 12">
    <original>I</original>
    <variation>L</variation>
    <location>
        <position position="441"/>
    </location>
</feature>
<feature type="sequence variant" id="VAR_070990" description="In PVOD2; dbSNP:rs587777106." evidence="14">
    <original>R</original>
    <variation>Q</variation>
    <location>
        <position position="585"/>
    </location>
</feature>
<feature type="sequence variant" id="VAR_070991" description="In PVOD2; dbSNP:rs757852728." evidence="14">
    <original>L</original>
    <variation>R</variation>
    <location>
        <position position="643"/>
    </location>
</feature>
<feature type="sequence variant" id="VAR_040482" description="In dbSNP:rs34665481." evidence="11">
    <original>D</original>
    <variation>V</variation>
    <location>
        <position position="872"/>
    </location>
</feature>
<feature type="sequence variant" id="VAR_040483" description="In a lung neuroendocrine carcinoma sample; somatic mutation." evidence="11">
    <original>H</original>
    <variation>Y</variation>
    <location>
        <position position="939"/>
    </location>
</feature>
<feature type="sequence variant" id="VAR_040484" description="In dbSNP:rs55781333." evidence="11">
    <original>T</original>
    <variation>R</variation>
    <location>
        <position position="1060"/>
    </location>
</feature>
<feature type="sequence variant" id="VAR_040485" description="In dbSNP:rs35602605." evidence="10 11">
    <original>G</original>
    <variation>C</variation>
    <location>
        <position position="1306"/>
    </location>
</feature>
<feature type="sequence variant" id="VAR_040486" description="In dbSNP:rs35480871." evidence="11">
    <original>K</original>
    <variation>R</variation>
    <location>
        <position position="1336"/>
    </location>
</feature>
<feature type="sequence variant" id="VAR_040487" description="In dbSNP:rs55721315." evidence="11">
    <original>Q</original>
    <variation>H</variation>
    <location>
        <position position="1406"/>
    </location>
</feature>
<feature type="sequence conflict" description="In Ref. 3; BAA92576 and 4; CAH10626." evidence="21" ref="3 4">
    <original>E</original>
    <variation>G</variation>
    <location>
        <position position="556"/>
    </location>
</feature>
<feature type="sequence conflict" description="In Ref. 4; CAH10626." evidence="21" ref="4">
    <original>Q</original>
    <variation>K</variation>
    <location>
        <position position="629"/>
    </location>
</feature>
<feature type="sequence conflict" description="In Ref. 5; BAB15625." evidence="21" ref="5">
    <original>S</original>
    <variation>F</variation>
    <location>
        <position position="858"/>
    </location>
</feature>
<feature type="sequence conflict" description="In Ref. 6; CAB58360." evidence="21" ref="6">
    <original>N</original>
    <variation>I</variation>
    <location>
        <position position="1133"/>
    </location>
</feature>
<feature type="helix" evidence="33">
    <location>
        <begin position="19"/>
        <end position="34"/>
    </location>
</feature>
<feature type="helix" evidence="33">
    <location>
        <begin position="35"/>
        <end position="37"/>
    </location>
</feature>
<feature type="strand" evidence="33">
    <location>
        <begin position="38"/>
        <end position="40"/>
    </location>
</feature>
<feature type="strand" evidence="33">
    <location>
        <begin position="46"/>
        <end position="48"/>
    </location>
</feature>
<feature type="strand" evidence="33">
    <location>
        <begin position="54"/>
        <end position="59"/>
    </location>
</feature>
<feature type="strand" evidence="34">
    <location>
        <begin position="66"/>
        <end position="69"/>
    </location>
</feature>
<feature type="strand" evidence="33">
    <location>
        <begin position="70"/>
        <end position="78"/>
    </location>
</feature>
<feature type="turn" evidence="33">
    <location>
        <begin position="81"/>
        <end position="84"/>
    </location>
</feature>
<feature type="strand" evidence="33">
    <location>
        <begin position="89"/>
        <end position="97"/>
    </location>
</feature>
<feature type="helix" evidence="33">
    <location>
        <begin position="100"/>
        <end position="116"/>
    </location>
</feature>
<feature type="turn" evidence="33">
    <location>
        <begin position="117"/>
        <end position="119"/>
    </location>
</feature>
<feature type="helix" evidence="33">
    <location>
        <begin position="123"/>
        <end position="136"/>
    </location>
</feature>
<feature type="helix" evidence="36">
    <location>
        <begin position="585"/>
        <end position="589"/>
    </location>
</feature>
<feature type="strand" evidence="36">
    <location>
        <begin position="590"/>
        <end position="599"/>
    </location>
</feature>
<feature type="strand" evidence="36">
    <location>
        <begin position="602"/>
        <end position="609"/>
    </location>
</feature>
<feature type="turn" evidence="36">
    <location>
        <begin position="610"/>
        <end position="612"/>
    </location>
</feature>
<feature type="strand" evidence="36">
    <location>
        <begin position="615"/>
        <end position="623"/>
    </location>
</feature>
<feature type="strand" evidence="36">
    <location>
        <begin position="625"/>
        <end position="627"/>
    </location>
</feature>
<feature type="helix" evidence="36">
    <location>
        <begin position="628"/>
        <end position="640"/>
    </location>
</feature>
<feature type="strand" evidence="36">
    <location>
        <begin position="651"/>
        <end position="658"/>
    </location>
</feature>
<feature type="strand" evidence="36">
    <location>
        <begin position="796"/>
        <end position="803"/>
    </location>
</feature>
<feature type="helix" evidence="36">
    <location>
        <begin position="810"/>
        <end position="815"/>
    </location>
</feature>
<feature type="helix" evidence="36">
    <location>
        <begin position="818"/>
        <end position="820"/>
    </location>
</feature>
<feature type="helix" evidence="36">
    <location>
        <begin position="822"/>
        <end position="841"/>
    </location>
</feature>
<feature type="strand" evidence="36">
    <location>
        <begin position="853"/>
        <end position="856"/>
    </location>
</feature>
<feature type="strand" evidence="36">
    <location>
        <begin position="862"/>
        <end position="864"/>
    </location>
</feature>
<feature type="strand" evidence="35">
    <location>
        <begin position="894"/>
        <end position="896"/>
    </location>
</feature>
<feature type="helix" evidence="36">
    <location>
        <begin position="905"/>
        <end position="907"/>
    </location>
</feature>
<feature type="strand" evidence="35">
    <location>
        <begin position="912"/>
        <end position="915"/>
    </location>
</feature>
<feature type="helix" evidence="36">
    <location>
        <begin position="923"/>
        <end position="937"/>
    </location>
</feature>
<feature type="helix" evidence="36">
    <location>
        <begin position="944"/>
        <end position="952"/>
    </location>
</feature>
<feature type="strand" evidence="32">
    <location>
        <begin position="957"/>
        <end position="959"/>
    </location>
</feature>
<feature type="turn" evidence="32">
    <location>
        <begin position="964"/>
        <end position="966"/>
    </location>
</feature>
<feature type="turn" evidence="36">
    <location>
        <begin position="968"/>
        <end position="970"/>
    </location>
</feature>
<feature type="helix" evidence="36">
    <location>
        <begin position="972"/>
        <end position="981"/>
    </location>
</feature>
<feature type="helix" evidence="36">
    <location>
        <begin position="986"/>
        <end position="988"/>
    </location>
</feature>
<feature type="helix" evidence="36">
    <location>
        <begin position="992"/>
        <end position="996"/>
    </location>
</feature>
<feature type="strand" evidence="31">
    <location>
        <begin position="998"/>
        <end position="1000"/>
    </location>
</feature>
<feature type="helix" evidence="37">
    <location>
        <begin position="1012"/>
        <end position="1019"/>
    </location>
</feature>
<feature type="helix" evidence="37">
    <location>
        <begin position="1025"/>
        <end position="1034"/>
    </location>
</feature>
<feature type="helix" evidence="37">
    <location>
        <begin position="1041"/>
        <end position="1045"/>
    </location>
</feature>
<feature type="turn" evidence="37">
    <location>
        <begin position="1046"/>
        <end position="1051"/>
    </location>
</feature>
<feature type="helix" evidence="37">
    <location>
        <begin position="1058"/>
        <end position="1076"/>
    </location>
</feature>
<feature type="turn" evidence="37">
    <location>
        <begin position="1077"/>
        <end position="1079"/>
    </location>
</feature>
<feature type="turn" evidence="37">
    <location>
        <begin position="1093"/>
        <end position="1095"/>
    </location>
</feature>
<feature type="strand" evidence="37">
    <location>
        <begin position="1096"/>
        <end position="1099"/>
    </location>
</feature>
<feature type="strand" evidence="37">
    <location>
        <begin position="1103"/>
        <end position="1106"/>
    </location>
</feature>
<feature type="strand" evidence="37">
    <location>
        <begin position="1111"/>
        <end position="1113"/>
    </location>
</feature>
<feature type="helix" evidence="37">
    <location>
        <begin position="1119"/>
        <end position="1129"/>
    </location>
</feature>
<feature type="strand" evidence="37">
    <location>
        <begin position="1133"/>
        <end position="1144"/>
    </location>
</feature>
<feature type="strand" evidence="37">
    <location>
        <begin position="1147"/>
        <end position="1150"/>
    </location>
</feature>
<feature type="strand" evidence="37">
    <location>
        <begin position="1154"/>
        <end position="1165"/>
    </location>
</feature>
<feature type="helix" evidence="37">
    <location>
        <begin position="1172"/>
        <end position="1187"/>
    </location>
</feature>
<feature type="helix" evidence="37">
    <location>
        <begin position="1189"/>
        <end position="1192"/>
    </location>
</feature>
<feature type="strand" evidence="37">
    <location>
        <begin position="1197"/>
        <end position="1202"/>
    </location>
</feature>
<feature type="helix" evidence="37">
    <location>
        <begin position="1203"/>
        <end position="1213"/>
    </location>
</feature>
<feature type="helix" evidence="37">
    <location>
        <begin position="1220"/>
        <end position="1233"/>
    </location>
</feature>
<feature type="helix" evidence="37">
    <location>
        <begin position="1237"/>
        <end position="1246"/>
    </location>
</feature>
<feature type="helix" evidence="37">
    <location>
        <begin position="1251"/>
        <end position="1255"/>
    </location>
</feature>
<feature type="turn" evidence="37">
    <location>
        <begin position="1256"/>
        <end position="1260"/>
    </location>
</feature>
<feature type="turn" evidence="37">
    <location>
        <begin position="1267"/>
        <end position="1269"/>
    </location>
</feature>
<feature type="helix" evidence="37">
    <location>
        <begin position="1271"/>
        <end position="1275"/>
    </location>
</feature>
<feature type="strand" evidence="37">
    <location>
        <begin position="1278"/>
        <end position="1280"/>
    </location>
</feature>
<feature type="helix" evidence="37">
    <location>
        <begin position="1284"/>
        <end position="1304"/>
    </location>
</feature>
<feature type="strand" evidence="37">
    <location>
        <begin position="1311"/>
        <end position="1316"/>
    </location>
</feature>
<feature type="turn" evidence="37">
    <location>
        <begin position="1321"/>
        <end position="1323"/>
    </location>
</feature>
<feature type="strand" evidence="37">
    <location>
        <begin position="1325"/>
        <end position="1337"/>
    </location>
</feature>
<feature type="strand" evidence="37">
    <location>
        <begin position="1340"/>
        <end position="1351"/>
    </location>
</feature>
<feature type="helix" evidence="37">
    <location>
        <begin position="1353"/>
        <end position="1355"/>
    </location>
</feature>
<feature type="helix" evidence="37">
    <location>
        <begin position="1356"/>
        <end position="1359"/>
    </location>
</feature>
<feature type="strand" evidence="37">
    <location>
        <begin position="1370"/>
        <end position="1377"/>
    </location>
</feature>
<feature type="helix" evidence="37">
    <location>
        <begin position="1378"/>
        <end position="1386"/>
    </location>
</feature>
<feature type="strand" evidence="37">
    <location>
        <begin position="1398"/>
        <end position="1403"/>
    </location>
</feature>
<feature type="helix" evidence="37">
    <location>
        <begin position="1406"/>
        <end position="1408"/>
    </location>
</feature>
<feature type="helix" evidence="37">
    <location>
        <begin position="1409"/>
        <end position="1421"/>
    </location>
</feature>
<feature type="strand" evidence="37">
    <location>
        <begin position="1426"/>
        <end position="1428"/>
    </location>
</feature>
<feature type="helix" evidence="37">
    <location>
        <begin position="1436"/>
        <end position="1446"/>
    </location>
</feature>
<feature type="strand" evidence="37">
    <location>
        <begin position="1450"/>
        <end position="1454"/>
    </location>
</feature>
<feature type="helix" evidence="37">
    <location>
        <begin position="1456"/>
        <end position="1458"/>
    </location>
</feature>
<feature type="strand" evidence="37">
    <location>
        <begin position="1461"/>
        <end position="1466"/>
    </location>
</feature>
<feature type="strand" evidence="37">
    <location>
        <begin position="1473"/>
        <end position="1478"/>
    </location>
</feature>
<feature type="helix" evidence="37">
    <location>
        <begin position="1479"/>
        <end position="1481"/>
    </location>
</feature>
<feature type="helix" evidence="37">
    <location>
        <begin position="1482"/>
        <end position="1492"/>
    </location>
</feature>
<accession>Q9P2K8</accession>
<accession>C9JEC4</accession>
<accession>Q69YL7</accession>
<accession>Q6DC97</accession>
<accession>Q96GN6</accession>
<accession>Q9H5K1</accession>
<accession>Q9NSQ3</accession>
<accession>Q9NSZ5</accession>
<accession>Q9UJ56</accession>
<protein>
    <recommendedName>
        <fullName evidence="3">eIF-2-alpha kinase GCN2</fullName>
        <ecNumber evidence="3">2.7.11.1</ecNumber>
    </recommendedName>
    <alternativeName>
        <fullName evidence="22">Eukaryotic translation initiation factor 2-alpha kinase 4</fullName>
    </alternativeName>
    <alternativeName>
        <fullName>GCN2-like protein</fullName>
    </alternativeName>
</protein>
<dbReference type="EC" id="2.7.11.1" evidence="3"/>
<dbReference type="EMBL" id="AC012377">
    <property type="status" value="NOT_ANNOTATED_CDS"/>
    <property type="molecule type" value="Genomic_DNA"/>
</dbReference>
<dbReference type="EMBL" id="AC025168">
    <property type="status" value="NOT_ANNOTATED_CDS"/>
    <property type="molecule type" value="Genomic_DNA"/>
</dbReference>
<dbReference type="EMBL" id="BC009350">
    <property type="protein sequence ID" value="AAH09350.2"/>
    <property type="molecule type" value="mRNA"/>
</dbReference>
<dbReference type="EMBL" id="BC078179">
    <property type="protein sequence ID" value="AAH78179.1"/>
    <property type="molecule type" value="mRNA"/>
</dbReference>
<dbReference type="EMBL" id="AB037759">
    <property type="protein sequence ID" value="BAA92576.1"/>
    <property type="status" value="ALT_SEQ"/>
    <property type="molecule type" value="mRNA"/>
</dbReference>
<dbReference type="EMBL" id="AL137627">
    <property type="protein sequence ID" value="CAB70849.1"/>
    <property type="molecule type" value="mRNA"/>
</dbReference>
<dbReference type="EMBL" id="AL157497">
    <property type="protein sequence ID" value="CAB75678.1"/>
    <property type="molecule type" value="mRNA"/>
</dbReference>
<dbReference type="EMBL" id="AL832907">
    <property type="protein sequence ID" value="CAH10626.1"/>
    <property type="molecule type" value="mRNA"/>
</dbReference>
<dbReference type="EMBL" id="AK027011">
    <property type="protein sequence ID" value="BAB15625.1"/>
    <property type="status" value="ALT_INIT"/>
    <property type="molecule type" value="mRNA"/>
</dbReference>
<dbReference type="EMBL" id="AJ243428">
    <property type="protein sequence ID" value="CAB58360.1"/>
    <property type="molecule type" value="mRNA"/>
</dbReference>
<dbReference type="CCDS" id="CCDS42016.1">
    <molecule id="Q9P2K8-1"/>
</dbReference>
<dbReference type="PIR" id="T46924">
    <property type="entry name" value="T46924"/>
</dbReference>
<dbReference type="RefSeq" id="NP_001013725.2">
    <molecule id="Q9P2K8-1"/>
    <property type="nucleotide sequence ID" value="NM_001013703.4"/>
</dbReference>
<dbReference type="PDB" id="6N3L">
    <property type="method" value="X-ray"/>
    <property type="resolution" value="2.61 A"/>
    <property type="chains" value="A/B=577-657, A/B=782-1013"/>
</dbReference>
<dbReference type="PDB" id="6N3N">
    <property type="method" value="X-ray"/>
    <property type="resolution" value="3.01 A"/>
    <property type="chains" value="A=577-1013"/>
</dbReference>
<dbReference type="PDB" id="6N3O">
    <property type="method" value="X-ray"/>
    <property type="resolution" value="2.40 A"/>
    <property type="chains" value="A=577-1013"/>
</dbReference>
<dbReference type="PDB" id="7E2K">
    <property type="method" value="X-ray"/>
    <property type="resolution" value="2.04 A"/>
    <property type="chains" value="A=17-139"/>
</dbReference>
<dbReference type="PDB" id="7E2M">
    <property type="method" value="X-ray"/>
    <property type="resolution" value="2.35 A"/>
    <property type="chains" value="A/B/C/D/E/F=17-139"/>
</dbReference>
<dbReference type="PDB" id="7QQ6">
    <property type="method" value="X-ray"/>
    <property type="resolution" value="2.80 A"/>
    <property type="chains" value="A/B/C/D=577-1020"/>
</dbReference>
<dbReference type="PDB" id="7QWK">
    <property type="method" value="X-ray"/>
    <property type="resolution" value="2.30 A"/>
    <property type="chains" value="A/B/C/D/E/F/G/H=1-1649"/>
</dbReference>
<dbReference type="PDB" id="8T7T">
    <property type="method" value="EM"/>
    <property type="resolution" value="3.20 A"/>
    <property type="chains" value="A/B=1-1649"/>
</dbReference>
<dbReference type="PDBsum" id="6N3L"/>
<dbReference type="PDBsum" id="6N3N"/>
<dbReference type="PDBsum" id="6N3O"/>
<dbReference type="PDBsum" id="7E2K"/>
<dbReference type="PDBsum" id="7E2M"/>
<dbReference type="PDBsum" id="7QQ6"/>
<dbReference type="PDBsum" id="7QWK"/>
<dbReference type="PDBsum" id="8T7T"/>
<dbReference type="EMDB" id="EMD-41094"/>
<dbReference type="SMR" id="Q9P2K8"/>
<dbReference type="BioGRID" id="136426">
    <property type="interactions" value="87"/>
</dbReference>
<dbReference type="FunCoup" id="Q9P2K8">
    <property type="interactions" value="2381"/>
</dbReference>
<dbReference type="IntAct" id="Q9P2K8">
    <property type="interactions" value="56"/>
</dbReference>
<dbReference type="MINT" id="Q9P2K8"/>
<dbReference type="STRING" id="9606.ENSP00000263791"/>
<dbReference type="BindingDB" id="Q9P2K8"/>
<dbReference type="ChEMBL" id="CHEMBL5358"/>
<dbReference type="DrugBank" id="DB12010">
    <property type="generic name" value="Fostamatinib"/>
</dbReference>
<dbReference type="DrugCentral" id="Q9P2K8"/>
<dbReference type="GuidetoPHARMACOLOGY" id="2018"/>
<dbReference type="iPTMnet" id="Q9P2K8"/>
<dbReference type="PhosphoSitePlus" id="Q9P2K8"/>
<dbReference type="SwissPalm" id="Q9P2K8"/>
<dbReference type="BioMuta" id="EIF2AK4"/>
<dbReference type="DMDM" id="296439368"/>
<dbReference type="CPTAC" id="CPTAC-2962"/>
<dbReference type="CPTAC" id="CPTAC-2963"/>
<dbReference type="jPOST" id="Q9P2K8"/>
<dbReference type="MassIVE" id="Q9P2K8"/>
<dbReference type="PaxDb" id="9606-ENSP00000263791"/>
<dbReference type="PeptideAtlas" id="Q9P2K8"/>
<dbReference type="ProteomicsDB" id="83838">
    <molecule id="Q9P2K8-1"/>
</dbReference>
<dbReference type="ProteomicsDB" id="83839">
    <molecule id="Q9P2K8-2"/>
</dbReference>
<dbReference type="ProteomicsDB" id="83840">
    <molecule id="Q9P2K8-3"/>
</dbReference>
<dbReference type="Pumba" id="Q9P2K8"/>
<dbReference type="Antibodypedia" id="22934">
    <property type="antibodies" value="419 antibodies from 37 providers"/>
</dbReference>
<dbReference type="DNASU" id="440275"/>
<dbReference type="Ensembl" id="ENST00000263791.10">
    <molecule id="Q9P2K8-1"/>
    <property type="protein sequence ID" value="ENSP00000263791.5"/>
    <property type="gene ID" value="ENSG00000128829.12"/>
</dbReference>
<dbReference type="Ensembl" id="ENST00000559624.5">
    <molecule id="Q9P2K8-3"/>
    <property type="protein sequence ID" value="ENSP00000453148.1"/>
    <property type="gene ID" value="ENSG00000128829.12"/>
</dbReference>
<dbReference type="GeneID" id="440275"/>
<dbReference type="KEGG" id="hsa:440275"/>
<dbReference type="MANE-Select" id="ENST00000263791.10">
    <property type="protein sequence ID" value="ENSP00000263791.5"/>
    <property type="RefSeq nucleotide sequence ID" value="NM_001013703.4"/>
    <property type="RefSeq protein sequence ID" value="NP_001013725.2"/>
</dbReference>
<dbReference type="UCSC" id="uc001zkl.4">
    <molecule id="Q9P2K8-1"/>
    <property type="organism name" value="human"/>
</dbReference>
<dbReference type="AGR" id="HGNC:19687"/>
<dbReference type="CTD" id="440275"/>
<dbReference type="DisGeNET" id="440275"/>
<dbReference type="GeneCards" id="EIF2AK4"/>
<dbReference type="HGNC" id="HGNC:19687">
    <property type="gene designation" value="EIF2AK4"/>
</dbReference>
<dbReference type="HPA" id="ENSG00000128829">
    <property type="expression patterns" value="Low tissue specificity"/>
</dbReference>
<dbReference type="MalaCards" id="EIF2AK4"/>
<dbReference type="MIM" id="234810">
    <property type="type" value="phenotype"/>
</dbReference>
<dbReference type="MIM" id="609280">
    <property type="type" value="gene"/>
</dbReference>
<dbReference type="neXtProt" id="NX_Q9P2K8"/>
<dbReference type="OpenTargets" id="ENSG00000128829"/>
<dbReference type="Orphanet" id="275777">
    <property type="disease" value="Heritable pulmonary arterial hypertension"/>
</dbReference>
<dbReference type="Orphanet" id="199241">
    <property type="disease" value="Pulmonary capillary hemangiomatosis"/>
</dbReference>
<dbReference type="Orphanet" id="31837">
    <property type="disease" value="Pulmonary venoocclusive disease"/>
</dbReference>
<dbReference type="PharmGKB" id="PA134947616"/>
<dbReference type="VEuPathDB" id="HostDB:ENSG00000128829"/>
<dbReference type="eggNOG" id="KOG1035">
    <property type="taxonomic scope" value="Eukaryota"/>
</dbReference>
<dbReference type="GeneTree" id="ENSGT00940000156798"/>
<dbReference type="HOGENOM" id="CLU_493107_0_0_1"/>
<dbReference type="InParanoid" id="Q9P2K8"/>
<dbReference type="OMA" id="FEDIAWD"/>
<dbReference type="OrthoDB" id="6778822at2759"/>
<dbReference type="PAN-GO" id="Q9P2K8">
    <property type="GO annotations" value="2 GO annotations based on evolutionary models"/>
</dbReference>
<dbReference type="PhylomeDB" id="Q9P2K8"/>
<dbReference type="TreeFam" id="TF101512"/>
<dbReference type="PathwayCommons" id="Q9P2K8"/>
<dbReference type="Reactome" id="R-HSA-9633012">
    <property type="pathway name" value="Response of EIF2AK4 (GCN2) to amino acid deficiency"/>
</dbReference>
<dbReference type="SignaLink" id="Q9P2K8"/>
<dbReference type="SIGNOR" id="Q9P2K8"/>
<dbReference type="BioGRID-ORCS" id="440275">
    <property type="hits" value="69 hits in 1164 CRISPR screens"/>
</dbReference>
<dbReference type="ChiTaRS" id="EIF2AK4">
    <property type="organism name" value="human"/>
</dbReference>
<dbReference type="GeneWiki" id="EIF2AK4"/>
<dbReference type="GenomeRNAi" id="440275"/>
<dbReference type="Pharos" id="Q9P2K8">
    <property type="development level" value="Tchem"/>
</dbReference>
<dbReference type="PRO" id="PR:Q9P2K8"/>
<dbReference type="Proteomes" id="UP000005640">
    <property type="component" value="Chromosome 15"/>
</dbReference>
<dbReference type="RNAct" id="Q9P2K8">
    <property type="molecule type" value="protein"/>
</dbReference>
<dbReference type="Bgee" id="ENSG00000128829">
    <property type="expression patterns" value="Expressed in adenohypophysis and 183 other cell types or tissues"/>
</dbReference>
<dbReference type="ExpressionAtlas" id="Q9P2K8">
    <property type="expression patterns" value="baseline and differential"/>
</dbReference>
<dbReference type="GO" id="GO:0005737">
    <property type="term" value="C:cytoplasm"/>
    <property type="evidence" value="ECO:0000250"/>
    <property type="project" value="UniProtKB"/>
</dbReference>
<dbReference type="GO" id="GO:0005829">
    <property type="term" value="C:cytosol"/>
    <property type="evidence" value="ECO:0000318"/>
    <property type="project" value="GO_Central"/>
</dbReference>
<dbReference type="GO" id="GO:0022626">
    <property type="term" value="C:cytosolic ribosome"/>
    <property type="evidence" value="ECO:0000250"/>
    <property type="project" value="UniProtKB"/>
</dbReference>
<dbReference type="GO" id="GO:0005634">
    <property type="term" value="C:nucleus"/>
    <property type="evidence" value="ECO:0000318"/>
    <property type="project" value="GO_Central"/>
</dbReference>
<dbReference type="GO" id="GO:0005524">
    <property type="term" value="F:ATP binding"/>
    <property type="evidence" value="ECO:0007669"/>
    <property type="project" value="UniProtKB-KW"/>
</dbReference>
<dbReference type="GO" id="GO:0004694">
    <property type="term" value="F:eukaryotic translation initiation factor 2alpha kinase activity"/>
    <property type="evidence" value="ECO:0000314"/>
    <property type="project" value="UniProt"/>
</dbReference>
<dbReference type="GO" id="GO:0106310">
    <property type="term" value="F:protein serine kinase activity"/>
    <property type="evidence" value="ECO:0007669"/>
    <property type="project" value="RHEA"/>
</dbReference>
<dbReference type="GO" id="GO:0004674">
    <property type="term" value="F:protein serine/threonine kinase activity"/>
    <property type="evidence" value="ECO:0000250"/>
    <property type="project" value="UniProtKB"/>
</dbReference>
<dbReference type="GO" id="GO:0000049">
    <property type="term" value="F:tRNA binding"/>
    <property type="evidence" value="ECO:0000250"/>
    <property type="project" value="UniProtKB"/>
</dbReference>
<dbReference type="GO" id="GO:0002250">
    <property type="term" value="P:adaptive immune response"/>
    <property type="evidence" value="ECO:0007669"/>
    <property type="project" value="UniProtKB-KW"/>
</dbReference>
<dbReference type="GO" id="GO:0034198">
    <property type="term" value="P:cellular response to amino acid starvation"/>
    <property type="evidence" value="ECO:0000315"/>
    <property type="project" value="UniProtKB"/>
</dbReference>
<dbReference type="GO" id="GO:0070417">
    <property type="term" value="P:cellular response to cold"/>
    <property type="evidence" value="ECO:0000315"/>
    <property type="project" value="UniProtKB"/>
</dbReference>
<dbReference type="GO" id="GO:0034644">
    <property type="term" value="P:cellular response to UV"/>
    <property type="evidence" value="ECO:0000250"/>
    <property type="project" value="UniProtKB"/>
</dbReference>
<dbReference type="GO" id="GO:0051607">
    <property type="term" value="P:defense response to virus"/>
    <property type="evidence" value="ECO:0007669"/>
    <property type="project" value="UniProtKB-KW"/>
</dbReference>
<dbReference type="GO" id="GO:0000077">
    <property type="term" value="P:DNA damage checkpoint signaling"/>
    <property type="evidence" value="ECO:0007669"/>
    <property type="project" value="InterPro"/>
</dbReference>
<dbReference type="GO" id="GO:0140469">
    <property type="term" value="P:GCN2-mediated signaling"/>
    <property type="evidence" value="ECO:0000314"/>
    <property type="project" value="UniProt"/>
</dbReference>
<dbReference type="GO" id="GO:0007612">
    <property type="term" value="P:learning"/>
    <property type="evidence" value="ECO:0000250"/>
    <property type="project" value="UniProtKB"/>
</dbReference>
<dbReference type="GO" id="GO:0007616">
    <property type="term" value="P:long-term memory"/>
    <property type="evidence" value="ECO:0000250"/>
    <property type="project" value="UniProtKB"/>
</dbReference>
<dbReference type="GO" id="GO:0044828">
    <property type="term" value="P:negative regulation by host of viral genome replication"/>
    <property type="evidence" value="ECO:0000250"/>
    <property type="project" value="UniProtKB"/>
</dbReference>
<dbReference type="GO" id="GO:0032792">
    <property type="term" value="P:negative regulation of CREB transcription factor activity"/>
    <property type="evidence" value="ECO:0000250"/>
    <property type="project" value="UniProtKB"/>
</dbReference>
<dbReference type="GO" id="GO:0045665">
    <property type="term" value="P:negative regulation of neuron differentiation"/>
    <property type="evidence" value="ECO:0000250"/>
    <property type="project" value="UniProtKB"/>
</dbReference>
<dbReference type="GO" id="GO:0045947">
    <property type="term" value="P:negative regulation of translational initiation"/>
    <property type="evidence" value="ECO:0000250"/>
    <property type="project" value="UniProtKB"/>
</dbReference>
<dbReference type="GO" id="GO:0032057">
    <property type="term" value="P:negative regulation of translational initiation in response to stress"/>
    <property type="evidence" value="ECO:0000250"/>
    <property type="project" value="UniProtKB"/>
</dbReference>
<dbReference type="GO" id="GO:1990138">
    <property type="term" value="P:neuron projection extension"/>
    <property type="evidence" value="ECO:0000250"/>
    <property type="project" value="UniProtKB"/>
</dbReference>
<dbReference type="GO" id="GO:0002821">
    <property type="term" value="P:positive regulation of adaptive immune response"/>
    <property type="evidence" value="ECO:0000250"/>
    <property type="project" value="UniProtKB"/>
</dbReference>
<dbReference type="GO" id="GO:0002230">
    <property type="term" value="P:positive regulation of defense response to virus by host"/>
    <property type="evidence" value="ECO:0000250"/>
    <property type="project" value="UniProtKB"/>
</dbReference>
<dbReference type="GO" id="GO:1900273">
    <property type="term" value="P:positive regulation of long-term synaptic potentiation"/>
    <property type="evidence" value="ECO:0000250"/>
    <property type="project" value="UniProtKB"/>
</dbReference>
<dbReference type="GO" id="GO:0071264">
    <property type="term" value="P:positive regulation of translational initiation in response to starvation"/>
    <property type="evidence" value="ECO:0000250"/>
    <property type="project" value="UniProtKB"/>
</dbReference>
<dbReference type="GO" id="GO:0046777">
    <property type="term" value="P:protein autophosphorylation"/>
    <property type="evidence" value="ECO:0000250"/>
    <property type="project" value="UniProtKB"/>
</dbReference>
<dbReference type="GO" id="GO:0006468">
    <property type="term" value="P:protein phosphorylation"/>
    <property type="evidence" value="ECO:0000250"/>
    <property type="project" value="UniProtKB"/>
</dbReference>
<dbReference type="GO" id="GO:0060259">
    <property type="term" value="P:regulation of feeding behavior"/>
    <property type="evidence" value="ECO:0000250"/>
    <property type="project" value="UniProtKB"/>
</dbReference>
<dbReference type="GO" id="GO:0006446">
    <property type="term" value="P:regulation of translational initiation"/>
    <property type="evidence" value="ECO:0000250"/>
    <property type="project" value="UniProtKB"/>
</dbReference>
<dbReference type="GO" id="GO:0010998">
    <property type="term" value="P:regulation of translational initiation by eIF2 alpha phosphorylation"/>
    <property type="evidence" value="ECO:0000315"/>
    <property type="project" value="UniProtKB"/>
</dbReference>
<dbReference type="GO" id="GO:0002286">
    <property type="term" value="P:T cell activation involved in immune response"/>
    <property type="evidence" value="ECO:0000250"/>
    <property type="project" value="UniProtKB"/>
</dbReference>
<dbReference type="GO" id="GO:0019081">
    <property type="term" value="P:viral translation"/>
    <property type="evidence" value="ECO:0000250"/>
    <property type="project" value="UniProtKB"/>
</dbReference>
<dbReference type="CDD" id="cd14012">
    <property type="entry name" value="PK_eIF2AK_GCN2_rpt1"/>
    <property type="match status" value="1"/>
</dbReference>
<dbReference type="CDD" id="cd23823">
    <property type="entry name" value="RWD_GCN2"/>
    <property type="match status" value="1"/>
</dbReference>
<dbReference type="CDD" id="cd14046">
    <property type="entry name" value="STKc_EIF2AK4_GCN2_rpt2"/>
    <property type="match status" value="1"/>
</dbReference>
<dbReference type="FunFam" id="1.10.510.10:FF:000338">
    <property type="entry name" value="Eukaryotic translation initiation factor 2-alpha kinase"/>
    <property type="match status" value="1"/>
</dbReference>
<dbReference type="FunFam" id="3.40.50.800:FF:000009">
    <property type="entry name" value="Eukaryotic translation initiation factor 2-alpha kinase"/>
    <property type="match status" value="1"/>
</dbReference>
<dbReference type="FunFam" id="1.10.510.10:FF:000353">
    <property type="entry name" value="Eukaryotic translation initiation factor 2-alpha kinase 4"/>
    <property type="match status" value="1"/>
</dbReference>
<dbReference type="FunFam" id="3.30.200.20:FF:000308">
    <property type="entry name" value="Eukaryotic translation initiation factor 2-alpha kinase 4"/>
    <property type="match status" value="1"/>
</dbReference>
<dbReference type="FunFam" id="3.30.930.10:FF:000031">
    <property type="entry name" value="Eukaryotic translation initiation factor 2-alpha kinase 4"/>
    <property type="match status" value="1"/>
</dbReference>
<dbReference type="FunFam" id="3.10.110.10:FF:000057">
    <property type="entry name" value="eukaryotic translation initiation factor 2-alpha kinase 4"/>
    <property type="match status" value="1"/>
</dbReference>
<dbReference type="Gene3D" id="3.40.50.800">
    <property type="entry name" value="Anticodon-binding domain"/>
    <property type="match status" value="1"/>
</dbReference>
<dbReference type="Gene3D" id="3.30.930.10">
    <property type="entry name" value="Bira Bifunctional Protein, Domain 2"/>
    <property type="match status" value="1"/>
</dbReference>
<dbReference type="Gene3D" id="3.30.200.20">
    <property type="entry name" value="Phosphorylase Kinase, domain 1"/>
    <property type="match status" value="1"/>
</dbReference>
<dbReference type="Gene3D" id="1.10.510.10">
    <property type="entry name" value="Transferase(Phosphotransferase) domain 1"/>
    <property type="match status" value="2"/>
</dbReference>
<dbReference type="Gene3D" id="3.10.110.10">
    <property type="entry name" value="Ubiquitin Conjugating Enzyme"/>
    <property type="match status" value="1"/>
</dbReference>
<dbReference type="InterPro" id="IPR045864">
    <property type="entry name" value="aa-tRNA-synth_II/BPL/LPL"/>
</dbReference>
<dbReference type="InterPro" id="IPR036621">
    <property type="entry name" value="Anticodon-bd_dom_sf"/>
</dbReference>
<dbReference type="InterPro" id="IPR050339">
    <property type="entry name" value="CC_SR_Kinase"/>
</dbReference>
<dbReference type="InterPro" id="IPR016255">
    <property type="entry name" value="Gcn2"/>
</dbReference>
<dbReference type="InterPro" id="IPR041715">
    <property type="entry name" value="HisRS-like_core"/>
</dbReference>
<dbReference type="InterPro" id="IPR024435">
    <property type="entry name" value="HisRS-related_dom"/>
</dbReference>
<dbReference type="InterPro" id="IPR011009">
    <property type="entry name" value="Kinase-like_dom_sf"/>
</dbReference>
<dbReference type="InterPro" id="IPR000719">
    <property type="entry name" value="Prot_kinase_dom"/>
</dbReference>
<dbReference type="InterPro" id="IPR017441">
    <property type="entry name" value="Protein_kinase_ATP_BS"/>
</dbReference>
<dbReference type="InterPro" id="IPR006575">
    <property type="entry name" value="RWD_dom"/>
</dbReference>
<dbReference type="InterPro" id="IPR008271">
    <property type="entry name" value="Ser/Thr_kinase_AS"/>
</dbReference>
<dbReference type="InterPro" id="IPR016135">
    <property type="entry name" value="UBQ-conjugating_enzyme/RWD"/>
</dbReference>
<dbReference type="PANTHER" id="PTHR11042:SF178">
    <property type="entry name" value="EUKARYOTIC TRANSLATION INITIATION FACTOR 2-ALPHA KINASE 1"/>
    <property type="match status" value="1"/>
</dbReference>
<dbReference type="PANTHER" id="PTHR11042">
    <property type="entry name" value="EUKARYOTIC TRANSLATION INITIATION FACTOR 2-ALPHA KINASE EIF2-ALPHA KINASE -RELATED"/>
    <property type="match status" value="1"/>
</dbReference>
<dbReference type="Pfam" id="PF12745">
    <property type="entry name" value="HGTP_anticodon2"/>
    <property type="match status" value="1"/>
</dbReference>
<dbReference type="Pfam" id="PF00069">
    <property type="entry name" value="Pkinase"/>
    <property type="match status" value="3"/>
</dbReference>
<dbReference type="Pfam" id="PF05773">
    <property type="entry name" value="RWD"/>
    <property type="match status" value="1"/>
</dbReference>
<dbReference type="Pfam" id="PF13393">
    <property type="entry name" value="tRNA-synt_His"/>
    <property type="match status" value="1"/>
</dbReference>
<dbReference type="PIRSF" id="PIRSF000660">
    <property type="entry name" value="Ser/Thr_PK_GCN2"/>
    <property type="match status" value="1"/>
</dbReference>
<dbReference type="SMART" id="SM00591">
    <property type="entry name" value="RWD"/>
    <property type="match status" value="1"/>
</dbReference>
<dbReference type="SMART" id="SM00220">
    <property type="entry name" value="S_TKc"/>
    <property type="match status" value="2"/>
</dbReference>
<dbReference type="SUPFAM" id="SSF55681">
    <property type="entry name" value="Class II aaRS and biotin synthetases"/>
    <property type="match status" value="1"/>
</dbReference>
<dbReference type="SUPFAM" id="SSF56112">
    <property type="entry name" value="Protein kinase-like (PK-like)"/>
    <property type="match status" value="2"/>
</dbReference>
<dbReference type="SUPFAM" id="SSF54495">
    <property type="entry name" value="UBC-like"/>
    <property type="match status" value="1"/>
</dbReference>
<dbReference type="PROSITE" id="PS00107">
    <property type="entry name" value="PROTEIN_KINASE_ATP"/>
    <property type="match status" value="1"/>
</dbReference>
<dbReference type="PROSITE" id="PS50011">
    <property type="entry name" value="PROTEIN_KINASE_DOM"/>
    <property type="match status" value="2"/>
</dbReference>
<dbReference type="PROSITE" id="PS00108">
    <property type="entry name" value="PROTEIN_KINASE_ST"/>
    <property type="match status" value="1"/>
</dbReference>
<dbReference type="PROSITE" id="PS50908">
    <property type="entry name" value="RWD"/>
    <property type="match status" value="1"/>
</dbReference>